<keyword id="KW-0687">Ribonucleoprotein</keyword>
<keyword id="KW-0689">Ribosomal protein</keyword>
<comment type="similarity">
    <text evidence="1">Belongs to the bacterial ribosomal protein bL33 family.</text>
</comment>
<organism>
    <name type="scientific">Streptococcus pyogenes serotype M4 (strain MGAS10750)</name>
    <dbReference type="NCBI Taxonomy" id="370554"/>
    <lineage>
        <taxon>Bacteria</taxon>
        <taxon>Bacillati</taxon>
        <taxon>Bacillota</taxon>
        <taxon>Bacilli</taxon>
        <taxon>Lactobacillales</taxon>
        <taxon>Streptococcaceae</taxon>
        <taxon>Streptococcus</taxon>
    </lineage>
</organism>
<name>RL333_STRPF</name>
<evidence type="ECO:0000255" key="1">
    <source>
        <dbReference type="HAMAP-Rule" id="MF_00294"/>
    </source>
</evidence>
<protein>
    <recommendedName>
        <fullName evidence="1">Large ribosomal subunit protein bL33C</fullName>
    </recommendedName>
    <alternativeName>
        <fullName evidence="1">50S ribosomal protein L33 3</fullName>
    </alternativeName>
</protein>
<proteinExistence type="inferred from homology"/>
<feature type="chain" id="PRO_0000356733" description="Large ribosomal subunit protein bL33C">
    <location>
        <begin position="1"/>
        <end position="49"/>
    </location>
</feature>
<accession>Q1J478</accession>
<sequence length="49" mass="5913">MRVNITLEHKESGERLYLTSKNKRNTPDRLQLKKYSPKLRKHVTFTEVK</sequence>
<reference key="1">
    <citation type="journal article" date="2006" name="Proc. Natl. Acad. Sci. U.S.A.">
        <title>Molecular genetic anatomy of inter- and intraserotype variation in the human bacterial pathogen group A Streptococcus.</title>
        <authorList>
            <person name="Beres S.B."/>
            <person name="Richter E.W."/>
            <person name="Nagiec M.J."/>
            <person name="Sumby P."/>
            <person name="Porcella S.F."/>
            <person name="DeLeo F.R."/>
            <person name="Musser J.M."/>
        </authorList>
    </citation>
    <scope>NUCLEOTIDE SEQUENCE [LARGE SCALE GENOMIC DNA]</scope>
    <source>
        <strain>MGAS10750</strain>
    </source>
</reference>
<dbReference type="EMBL" id="CP000262">
    <property type="protein sequence ID" value="ABF38883.1"/>
    <property type="molecule type" value="Genomic_DNA"/>
</dbReference>
<dbReference type="SMR" id="Q1J478"/>
<dbReference type="KEGG" id="spi:MGAS10750_Spy1933"/>
<dbReference type="HOGENOM" id="CLU_190949_3_2_9"/>
<dbReference type="Proteomes" id="UP000002434">
    <property type="component" value="Chromosome"/>
</dbReference>
<dbReference type="GO" id="GO:0005737">
    <property type="term" value="C:cytoplasm"/>
    <property type="evidence" value="ECO:0007669"/>
    <property type="project" value="UniProtKB-ARBA"/>
</dbReference>
<dbReference type="GO" id="GO:1990904">
    <property type="term" value="C:ribonucleoprotein complex"/>
    <property type="evidence" value="ECO:0007669"/>
    <property type="project" value="UniProtKB-KW"/>
</dbReference>
<dbReference type="GO" id="GO:0005840">
    <property type="term" value="C:ribosome"/>
    <property type="evidence" value="ECO:0007669"/>
    <property type="project" value="UniProtKB-KW"/>
</dbReference>
<dbReference type="GO" id="GO:0003735">
    <property type="term" value="F:structural constituent of ribosome"/>
    <property type="evidence" value="ECO:0007669"/>
    <property type="project" value="InterPro"/>
</dbReference>
<dbReference type="GO" id="GO:0006412">
    <property type="term" value="P:translation"/>
    <property type="evidence" value="ECO:0007669"/>
    <property type="project" value="UniProtKB-UniRule"/>
</dbReference>
<dbReference type="Gene3D" id="2.20.28.120">
    <property type="entry name" value="Ribosomal protein L33"/>
    <property type="match status" value="1"/>
</dbReference>
<dbReference type="HAMAP" id="MF_00294">
    <property type="entry name" value="Ribosomal_bL33"/>
    <property type="match status" value="1"/>
</dbReference>
<dbReference type="InterPro" id="IPR001705">
    <property type="entry name" value="Ribosomal_bL33"/>
</dbReference>
<dbReference type="InterPro" id="IPR018264">
    <property type="entry name" value="Ribosomal_bL33_CS"/>
</dbReference>
<dbReference type="InterPro" id="IPR038584">
    <property type="entry name" value="Ribosomal_bL33_sf"/>
</dbReference>
<dbReference type="InterPro" id="IPR011332">
    <property type="entry name" value="Ribosomal_zn-bd"/>
</dbReference>
<dbReference type="NCBIfam" id="NF001764">
    <property type="entry name" value="PRK00504.1"/>
    <property type="match status" value="1"/>
</dbReference>
<dbReference type="NCBIfam" id="NF001860">
    <property type="entry name" value="PRK00595.1"/>
    <property type="match status" value="1"/>
</dbReference>
<dbReference type="NCBIfam" id="TIGR01023">
    <property type="entry name" value="rpmG_bact"/>
    <property type="match status" value="1"/>
</dbReference>
<dbReference type="PANTHER" id="PTHR43168">
    <property type="entry name" value="50S RIBOSOMAL PROTEIN L33, CHLOROPLASTIC"/>
    <property type="match status" value="1"/>
</dbReference>
<dbReference type="PANTHER" id="PTHR43168:SF2">
    <property type="entry name" value="LARGE RIBOSOMAL SUBUNIT PROTEIN BL33C"/>
    <property type="match status" value="1"/>
</dbReference>
<dbReference type="Pfam" id="PF00471">
    <property type="entry name" value="Ribosomal_L33"/>
    <property type="match status" value="1"/>
</dbReference>
<dbReference type="SUPFAM" id="SSF57829">
    <property type="entry name" value="Zn-binding ribosomal proteins"/>
    <property type="match status" value="1"/>
</dbReference>
<dbReference type="PROSITE" id="PS00582">
    <property type="entry name" value="RIBOSOMAL_L33"/>
    <property type="match status" value="1"/>
</dbReference>
<gene>
    <name evidence="1" type="primary">rpmG3</name>
    <name type="ordered locus">MGAS10750_Spy1933</name>
</gene>